<accession>A8EZX3</accession>
<reference key="1">
    <citation type="submission" date="2007-09" db="EMBL/GenBank/DDBJ databases">
        <title>Complete genome sequence of Rickettsia canadensis.</title>
        <authorList>
            <person name="Madan A."/>
            <person name="Fahey J."/>
            <person name="Helton E."/>
            <person name="Ketteman M."/>
            <person name="Madan A."/>
            <person name="Rodrigues S."/>
            <person name="Sanchez A."/>
            <person name="Whiting M."/>
            <person name="Dasch G."/>
            <person name="Eremeeva M."/>
        </authorList>
    </citation>
    <scope>NUCLEOTIDE SEQUENCE [LARGE SCALE GENOMIC DNA]</scope>
    <source>
        <strain>McKiel</strain>
    </source>
</reference>
<gene>
    <name evidence="1" type="primary">fabH</name>
    <name type="ordered locus">A1E_04950</name>
</gene>
<protein>
    <recommendedName>
        <fullName evidence="1">Beta-ketoacyl-[acyl-carrier-protein] synthase III</fullName>
        <shortName evidence="1">Beta-ketoacyl-ACP synthase III</shortName>
        <shortName evidence="1">KAS III</shortName>
        <ecNumber evidence="1">2.3.1.180</ecNumber>
    </recommendedName>
    <alternativeName>
        <fullName evidence="1">3-oxoacyl-[acyl-carrier-protein] synthase 3</fullName>
    </alternativeName>
    <alternativeName>
        <fullName evidence="1">3-oxoacyl-[acyl-carrier-protein] synthase III</fullName>
    </alternativeName>
</protein>
<organism>
    <name type="scientific">Rickettsia canadensis (strain McKiel)</name>
    <dbReference type="NCBI Taxonomy" id="293613"/>
    <lineage>
        <taxon>Bacteria</taxon>
        <taxon>Pseudomonadati</taxon>
        <taxon>Pseudomonadota</taxon>
        <taxon>Alphaproteobacteria</taxon>
        <taxon>Rickettsiales</taxon>
        <taxon>Rickettsiaceae</taxon>
        <taxon>Rickettsieae</taxon>
        <taxon>Rickettsia</taxon>
        <taxon>belli group</taxon>
    </lineage>
</organism>
<dbReference type="EC" id="2.3.1.180" evidence="1"/>
<dbReference type="EMBL" id="CP000409">
    <property type="protein sequence ID" value="ABV73906.1"/>
    <property type="molecule type" value="Genomic_DNA"/>
</dbReference>
<dbReference type="RefSeq" id="WP_012149101.1">
    <property type="nucleotide sequence ID" value="NC_009879.1"/>
</dbReference>
<dbReference type="SMR" id="A8EZX3"/>
<dbReference type="STRING" id="293613.A1E_04950"/>
<dbReference type="KEGG" id="rcm:A1E_04950"/>
<dbReference type="eggNOG" id="COG0332">
    <property type="taxonomic scope" value="Bacteria"/>
</dbReference>
<dbReference type="HOGENOM" id="CLU_039592_3_1_5"/>
<dbReference type="UniPathway" id="UPA00094"/>
<dbReference type="Proteomes" id="UP000007056">
    <property type="component" value="Chromosome"/>
</dbReference>
<dbReference type="GO" id="GO:0005737">
    <property type="term" value="C:cytoplasm"/>
    <property type="evidence" value="ECO:0007669"/>
    <property type="project" value="UniProtKB-SubCell"/>
</dbReference>
<dbReference type="GO" id="GO:0004315">
    <property type="term" value="F:3-oxoacyl-[acyl-carrier-protein] synthase activity"/>
    <property type="evidence" value="ECO:0007669"/>
    <property type="project" value="InterPro"/>
</dbReference>
<dbReference type="GO" id="GO:0033818">
    <property type="term" value="F:beta-ketoacyl-acyl-carrier-protein synthase III activity"/>
    <property type="evidence" value="ECO:0007669"/>
    <property type="project" value="UniProtKB-UniRule"/>
</dbReference>
<dbReference type="GO" id="GO:0006633">
    <property type="term" value="P:fatty acid biosynthetic process"/>
    <property type="evidence" value="ECO:0007669"/>
    <property type="project" value="UniProtKB-UniRule"/>
</dbReference>
<dbReference type="CDD" id="cd00830">
    <property type="entry name" value="KAS_III"/>
    <property type="match status" value="1"/>
</dbReference>
<dbReference type="FunFam" id="3.40.47.10:FF:000004">
    <property type="entry name" value="3-oxoacyl-[acyl-carrier-protein] synthase 3"/>
    <property type="match status" value="1"/>
</dbReference>
<dbReference type="Gene3D" id="3.40.47.10">
    <property type="match status" value="1"/>
</dbReference>
<dbReference type="HAMAP" id="MF_01815">
    <property type="entry name" value="FabH"/>
    <property type="match status" value="1"/>
</dbReference>
<dbReference type="InterPro" id="IPR013747">
    <property type="entry name" value="ACP_syn_III_C"/>
</dbReference>
<dbReference type="InterPro" id="IPR013751">
    <property type="entry name" value="ACP_syn_III_N"/>
</dbReference>
<dbReference type="InterPro" id="IPR004655">
    <property type="entry name" value="FabH"/>
</dbReference>
<dbReference type="InterPro" id="IPR016039">
    <property type="entry name" value="Thiolase-like"/>
</dbReference>
<dbReference type="NCBIfam" id="TIGR00747">
    <property type="entry name" value="fabH"/>
    <property type="match status" value="1"/>
</dbReference>
<dbReference type="NCBIfam" id="NF006829">
    <property type="entry name" value="PRK09352.1"/>
    <property type="match status" value="1"/>
</dbReference>
<dbReference type="PANTHER" id="PTHR43091">
    <property type="entry name" value="3-OXOACYL-[ACYL-CARRIER-PROTEIN] SYNTHASE"/>
    <property type="match status" value="1"/>
</dbReference>
<dbReference type="PANTHER" id="PTHR43091:SF1">
    <property type="entry name" value="BETA-KETOACYL-[ACYL-CARRIER-PROTEIN] SYNTHASE III, CHLOROPLASTIC"/>
    <property type="match status" value="1"/>
</dbReference>
<dbReference type="Pfam" id="PF08545">
    <property type="entry name" value="ACP_syn_III"/>
    <property type="match status" value="1"/>
</dbReference>
<dbReference type="Pfam" id="PF08541">
    <property type="entry name" value="ACP_syn_III_C"/>
    <property type="match status" value="1"/>
</dbReference>
<dbReference type="SUPFAM" id="SSF53901">
    <property type="entry name" value="Thiolase-like"/>
    <property type="match status" value="1"/>
</dbReference>
<sequence>MTCKIIGCGQYLPSKIVSNDELTKFVDTNDEWIRTRTGITQRHIADDTEYTSHLALKSAEKAIEDAGISANDIDLIIICTTTPDHSFPSVATKLQGYLGLTNIPSFDLQAVCAGFVYGLQVANSLIASSKYKTVLLIGAEKMTSLLDWNDRSTCVLFGDGAGSVILQRSSDDSGLIESNIFSSGIDYDILYTNGGISMNGTSGKIIMQGQKLFRHAIEKMQQSIEELLCANQFSVSDIDYFIPHQANVRIINKLAELLNIEEHKIIKTVEKHANCSAASIPLALSTLKGLGKIKKGDILLFSAIGAGLTWGSALIRW</sequence>
<keyword id="KW-0012">Acyltransferase</keyword>
<keyword id="KW-0963">Cytoplasm</keyword>
<keyword id="KW-0275">Fatty acid biosynthesis</keyword>
<keyword id="KW-0276">Fatty acid metabolism</keyword>
<keyword id="KW-0444">Lipid biosynthesis</keyword>
<keyword id="KW-0443">Lipid metabolism</keyword>
<keyword id="KW-0511">Multifunctional enzyme</keyword>
<keyword id="KW-0808">Transferase</keyword>
<evidence type="ECO:0000255" key="1">
    <source>
        <dbReference type="HAMAP-Rule" id="MF_01815"/>
    </source>
</evidence>
<proteinExistence type="inferred from homology"/>
<name>FABH_RICCK</name>
<comment type="function">
    <text evidence="1">Catalyzes the condensation reaction of fatty acid synthesis by the addition to an acyl acceptor of two carbons from malonyl-ACP. Catalyzes the first condensation reaction which initiates fatty acid synthesis and may therefore play a role in governing the total rate of fatty acid production. Possesses both acetoacetyl-ACP synthase and acetyl transacylase activities. Its substrate specificity determines the biosynthesis of branched-chain and/or straight-chain of fatty acids.</text>
</comment>
<comment type="catalytic activity">
    <reaction evidence="1">
        <text>malonyl-[ACP] + acetyl-CoA + H(+) = 3-oxobutanoyl-[ACP] + CO2 + CoA</text>
        <dbReference type="Rhea" id="RHEA:12080"/>
        <dbReference type="Rhea" id="RHEA-COMP:9623"/>
        <dbReference type="Rhea" id="RHEA-COMP:9625"/>
        <dbReference type="ChEBI" id="CHEBI:15378"/>
        <dbReference type="ChEBI" id="CHEBI:16526"/>
        <dbReference type="ChEBI" id="CHEBI:57287"/>
        <dbReference type="ChEBI" id="CHEBI:57288"/>
        <dbReference type="ChEBI" id="CHEBI:78449"/>
        <dbReference type="ChEBI" id="CHEBI:78450"/>
        <dbReference type="EC" id="2.3.1.180"/>
    </reaction>
</comment>
<comment type="pathway">
    <text evidence="1">Lipid metabolism; fatty acid biosynthesis.</text>
</comment>
<comment type="subunit">
    <text evidence="1">Homodimer.</text>
</comment>
<comment type="subcellular location">
    <subcellularLocation>
        <location evidence="1">Cytoplasm</location>
    </subcellularLocation>
</comment>
<comment type="domain">
    <text evidence="1">The last Arg residue of the ACP-binding site is essential for the weak association between ACP/AcpP and FabH.</text>
</comment>
<comment type="similarity">
    <text evidence="1">Belongs to the thiolase-like superfamily. FabH family.</text>
</comment>
<feature type="chain" id="PRO_1000056400" description="Beta-ketoacyl-[acyl-carrier-protein] synthase III">
    <location>
        <begin position="1"/>
        <end position="317"/>
    </location>
</feature>
<feature type="region of interest" description="ACP-binding" evidence="1">
    <location>
        <begin position="245"/>
        <end position="249"/>
    </location>
</feature>
<feature type="active site" evidence="1">
    <location>
        <position position="112"/>
    </location>
</feature>
<feature type="active site" evidence="1">
    <location>
        <position position="244"/>
    </location>
</feature>
<feature type="active site" evidence="1">
    <location>
        <position position="274"/>
    </location>
</feature>